<comment type="function">
    <text evidence="1">Site-specific tyrosine recombinase, which acts by catalyzing the cutting and rejoining of the recombining DNA molecules. The XerC-XerD complex is essential to convert dimers of the bacterial chromosome into monomers to permit their segregation at cell division. It also contributes to the segregational stability of plasmids.</text>
</comment>
<comment type="subunit">
    <text evidence="1">Forms a cyclic heterotetrameric complex composed of two molecules of XerC and two molecules of XerD.</text>
</comment>
<comment type="subcellular location">
    <subcellularLocation>
        <location evidence="1">Cytoplasm</location>
    </subcellularLocation>
</comment>
<comment type="similarity">
    <text evidence="1">Belongs to the 'phage' integrase family. XerD subfamily.</text>
</comment>
<accession>Q93C64</accession>
<evidence type="ECO:0000255" key="1">
    <source>
        <dbReference type="HAMAP-Rule" id="MF_01807"/>
    </source>
</evidence>
<evidence type="ECO:0000255" key="2">
    <source>
        <dbReference type="PROSITE-ProRule" id="PRU01246"/>
    </source>
</evidence>
<evidence type="ECO:0000255" key="3">
    <source>
        <dbReference type="PROSITE-ProRule" id="PRU01248"/>
    </source>
</evidence>
<feature type="chain" id="PRO_0000095391" description="Tyrosine recombinase XerD">
    <location>
        <begin position="1"/>
        <end position="293"/>
    </location>
</feature>
<feature type="domain" description="Core-binding (CB)" evidence="3">
    <location>
        <begin position="1"/>
        <end position="83"/>
    </location>
</feature>
<feature type="domain" description="Tyr recombinase" evidence="2">
    <location>
        <begin position="104"/>
        <end position="287"/>
    </location>
</feature>
<feature type="active site" evidence="1">
    <location>
        <position position="144"/>
    </location>
</feature>
<feature type="active site" evidence="1">
    <location>
        <position position="168"/>
    </location>
</feature>
<feature type="active site" evidence="1">
    <location>
        <position position="239"/>
    </location>
</feature>
<feature type="active site" evidence="1">
    <location>
        <position position="242"/>
    </location>
</feature>
<feature type="active site" evidence="1">
    <location>
        <position position="265"/>
    </location>
</feature>
<feature type="active site" description="O-(3'-phospho-DNA)-tyrosine intermediate" evidence="1">
    <location>
        <position position="274"/>
    </location>
</feature>
<keyword id="KW-0131">Cell cycle</keyword>
<keyword id="KW-0132">Cell division</keyword>
<keyword id="KW-0159">Chromosome partition</keyword>
<keyword id="KW-0963">Cytoplasm</keyword>
<keyword id="KW-0229">DNA integration</keyword>
<keyword id="KW-0233">DNA recombination</keyword>
<keyword id="KW-0238">DNA-binding</keyword>
<sequence length="293" mass="33230">MHGLIADFIHYLDVERGLARTTQVSYQQDLTTFMAWLSDQKQTTFPEDFGVIQAFLKHQNDTKAPASVSRMISALRKFYRFLLREGAIKSDPMTKIDTPKKAQHLPATLSGTEIDALMAKPDTTKPLGLRDRAIFELMYATGLRVSEVVGLRLDQLHLAMNLLQVTGKGDKERLVPISPQAADWVNRYLQESRPRLIKHQQPKAVFVNFHGHALTRQVIWKNLKAYIASVGIEKDVTPHTLRHSFATRLLENGADLRVVQELLGHSDISTTQIYTHLSNQHLVAVYHKTHPRG</sequence>
<name>XERD_LACCA</name>
<gene>
    <name evidence="1" type="primary">xerD</name>
</gene>
<proteinExistence type="inferred from homology"/>
<dbReference type="EMBL" id="AF413208">
    <property type="protein sequence ID" value="AAL07436.1"/>
    <property type="molecule type" value="Genomic_DNA"/>
</dbReference>
<dbReference type="SMR" id="Q93C64"/>
<dbReference type="STRING" id="1582.AAW28_04450"/>
<dbReference type="GO" id="GO:0005737">
    <property type="term" value="C:cytoplasm"/>
    <property type="evidence" value="ECO:0007669"/>
    <property type="project" value="UniProtKB-SubCell"/>
</dbReference>
<dbReference type="GO" id="GO:0003677">
    <property type="term" value="F:DNA binding"/>
    <property type="evidence" value="ECO:0007669"/>
    <property type="project" value="UniProtKB-KW"/>
</dbReference>
<dbReference type="GO" id="GO:0009037">
    <property type="term" value="F:tyrosine-based site-specific recombinase activity"/>
    <property type="evidence" value="ECO:0007669"/>
    <property type="project" value="UniProtKB-UniRule"/>
</dbReference>
<dbReference type="GO" id="GO:0051301">
    <property type="term" value="P:cell division"/>
    <property type="evidence" value="ECO:0007669"/>
    <property type="project" value="UniProtKB-KW"/>
</dbReference>
<dbReference type="GO" id="GO:0007059">
    <property type="term" value="P:chromosome segregation"/>
    <property type="evidence" value="ECO:0007669"/>
    <property type="project" value="UniProtKB-UniRule"/>
</dbReference>
<dbReference type="GO" id="GO:0006313">
    <property type="term" value="P:DNA transposition"/>
    <property type="evidence" value="ECO:0007669"/>
    <property type="project" value="UniProtKB-UniRule"/>
</dbReference>
<dbReference type="CDD" id="cd00798">
    <property type="entry name" value="INT_XerDC_C"/>
    <property type="match status" value="1"/>
</dbReference>
<dbReference type="Gene3D" id="1.10.150.130">
    <property type="match status" value="1"/>
</dbReference>
<dbReference type="Gene3D" id="1.10.443.10">
    <property type="entry name" value="Intergrase catalytic core"/>
    <property type="match status" value="1"/>
</dbReference>
<dbReference type="HAMAP" id="MF_01808">
    <property type="entry name" value="Recomb_XerC_XerD"/>
    <property type="match status" value="1"/>
</dbReference>
<dbReference type="HAMAP" id="MF_01807">
    <property type="entry name" value="Recomb_XerD"/>
    <property type="match status" value="1"/>
</dbReference>
<dbReference type="InterPro" id="IPR044068">
    <property type="entry name" value="CB"/>
</dbReference>
<dbReference type="InterPro" id="IPR011010">
    <property type="entry name" value="DNA_brk_join_enz"/>
</dbReference>
<dbReference type="InterPro" id="IPR013762">
    <property type="entry name" value="Integrase-like_cat_sf"/>
</dbReference>
<dbReference type="InterPro" id="IPR002104">
    <property type="entry name" value="Integrase_catalytic"/>
</dbReference>
<dbReference type="InterPro" id="IPR010998">
    <property type="entry name" value="Integrase_recombinase_N"/>
</dbReference>
<dbReference type="InterPro" id="IPR004107">
    <property type="entry name" value="Integrase_SAM-like_N"/>
</dbReference>
<dbReference type="InterPro" id="IPR011932">
    <property type="entry name" value="Recomb_XerD"/>
</dbReference>
<dbReference type="InterPro" id="IPR023009">
    <property type="entry name" value="Tyrosine_recombinase_XerC/XerD"/>
</dbReference>
<dbReference type="InterPro" id="IPR050090">
    <property type="entry name" value="Tyrosine_recombinase_XerCD"/>
</dbReference>
<dbReference type="NCBIfam" id="NF001399">
    <property type="entry name" value="PRK00283.1"/>
    <property type="match status" value="1"/>
</dbReference>
<dbReference type="NCBIfam" id="NF040815">
    <property type="entry name" value="recomb_XerA_Arch"/>
    <property type="match status" value="1"/>
</dbReference>
<dbReference type="NCBIfam" id="TIGR02225">
    <property type="entry name" value="recomb_XerD"/>
    <property type="match status" value="1"/>
</dbReference>
<dbReference type="PANTHER" id="PTHR30349">
    <property type="entry name" value="PHAGE INTEGRASE-RELATED"/>
    <property type="match status" value="1"/>
</dbReference>
<dbReference type="PANTHER" id="PTHR30349:SF81">
    <property type="entry name" value="TYROSINE RECOMBINASE XERC"/>
    <property type="match status" value="1"/>
</dbReference>
<dbReference type="Pfam" id="PF02899">
    <property type="entry name" value="Phage_int_SAM_1"/>
    <property type="match status" value="1"/>
</dbReference>
<dbReference type="Pfam" id="PF00589">
    <property type="entry name" value="Phage_integrase"/>
    <property type="match status" value="1"/>
</dbReference>
<dbReference type="SUPFAM" id="SSF56349">
    <property type="entry name" value="DNA breaking-rejoining enzymes"/>
    <property type="match status" value="1"/>
</dbReference>
<dbReference type="PROSITE" id="PS51900">
    <property type="entry name" value="CB"/>
    <property type="match status" value="1"/>
</dbReference>
<dbReference type="PROSITE" id="PS51898">
    <property type="entry name" value="TYR_RECOMBINASE"/>
    <property type="match status" value="1"/>
</dbReference>
<reference key="1">
    <citation type="submission" date="2001-08" db="EMBL/GenBank/DDBJ databases">
        <title>The cloning and characterization of the Lactobacillus casei xerD gene.</title>
        <authorList>
            <person name="Flandin J.-F."/>
            <person name="Teijeiro S."/>
            <person name="Szatmari G.B."/>
        </authorList>
    </citation>
    <scope>NUCLEOTIDE SEQUENCE [GENOMIC DNA]</scope>
</reference>
<organism>
    <name type="scientific">Lacticaseibacillus casei</name>
    <name type="common">Lactobacillus casei</name>
    <dbReference type="NCBI Taxonomy" id="1582"/>
    <lineage>
        <taxon>Bacteria</taxon>
        <taxon>Bacillati</taxon>
        <taxon>Bacillota</taxon>
        <taxon>Bacilli</taxon>
        <taxon>Lactobacillales</taxon>
        <taxon>Lactobacillaceae</taxon>
        <taxon>Lacticaseibacillus</taxon>
    </lineage>
</organism>
<protein>
    <recommendedName>
        <fullName evidence="1">Tyrosine recombinase XerD</fullName>
    </recommendedName>
</protein>